<name>TRMD_MYCMS</name>
<proteinExistence type="inferred from homology"/>
<comment type="function">
    <text evidence="1">Specifically methylates guanosine-37 in various tRNAs.</text>
</comment>
<comment type="catalytic activity">
    <reaction evidence="1">
        <text>guanosine(37) in tRNA + S-adenosyl-L-methionine = N(1)-methylguanosine(37) in tRNA + S-adenosyl-L-homocysteine + H(+)</text>
        <dbReference type="Rhea" id="RHEA:36899"/>
        <dbReference type="Rhea" id="RHEA-COMP:10145"/>
        <dbReference type="Rhea" id="RHEA-COMP:10147"/>
        <dbReference type="ChEBI" id="CHEBI:15378"/>
        <dbReference type="ChEBI" id="CHEBI:57856"/>
        <dbReference type="ChEBI" id="CHEBI:59789"/>
        <dbReference type="ChEBI" id="CHEBI:73542"/>
        <dbReference type="ChEBI" id="CHEBI:74269"/>
        <dbReference type="EC" id="2.1.1.228"/>
    </reaction>
</comment>
<comment type="subunit">
    <text evidence="1">Homodimer.</text>
</comment>
<comment type="subcellular location">
    <subcellularLocation>
        <location evidence="1">Cytoplasm</location>
    </subcellularLocation>
</comment>
<comment type="similarity">
    <text evidence="1">Belongs to the RNA methyltransferase TrmD family.</text>
</comment>
<keyword id="KW-0963">Cytoplasm</keyword>
<keyword id="KW-0489">Methyltransferase</keyword>
<keyword id="KW-1185">Reference proteome</keyword>
<keyword id="KW-0949">S-adenosyl-L-methionine</keyword>
<keyword id="KW-0808">Transferase</keyword>
<keyword id="KW-0819">tRNA processing</keyword>
<evidence type="ECO:0000255" key="1">
    <source>
        <dbReference type="HAMAP-Rule" id="MF_00605"/>
    </source>
</evidence>
<accession>Q6MTI1</accession>
<sequence length="240" mass="27699">MKFSIITLFPKIINSYIEESIIKRAINKQAIKIEIIDLRNFSTLSHNQVDDYQYGGGSGMVLMIEPLIKAIESVKTTKSIVLLTTPQGKTLNQSIVKTYANNYEHIIIVCGHYEGYDERVLDYIDDEISIGDYVITGGELASLILVDSISRLLPNVIKQESHENESFENNLLDHPVYTKPYEFRNKKVPDVLLSGHHQNIKKWREEQQVIKTLKKRPDLIDITKLNRHQLEIYKKMKGEQ</sequence>
<organism>
    <name type="scientific">Mycoplasma mycoides subsp. mycoides SC (strain CCUG 32753 / NCTC 10114 / PG1)</name>
    <dbReference type="NCBI Taxonomy" id="272632"/>
    <lineage>
        <taxon>Bacteria</taxon>
        <taxon>Bacillati</taxon>
        <taxon>Mycoplasmatota</taxon>
        <taxon>Mollicutes</taxon>
        <taxon>Mycoplasmataceae</taxon>
        <taxon>Mycoplasma</taxon>
    </lineage>
</organism>
<dbReference type="EC" id="2.1.1.228" evidence="1"/>
<dbReference type="EMBL" id="BX293980">
    <property type="protein sequence ID" value="CAE77055.1"/>
    <property type="molecule type" value="Genomic_DNA"/>
</dbReference>
<dbReference type="RefSeq" id="NP_975413.1">
    <property type="nucleotide sequence ID" value="NC_005364.2"/>
</dbReference>
<dbReference type="RefSeq" id="WP_011166611.1">
    <property type="nucleotide sequence ID" value="NC_005364.2"/>
</dbReference>
<dbReference type="SMR" id="Q6MTI1"/>
<dbReference type="STRING" id="272632.MSC_0427"/>
<dbReference type="KEGG" id="mmy:MSC_0427"/>
<dbReference type="PATRIC" id="fig|272632.4.peg.465"/>
<dbReference type="eggNOG" id="COG0336">
    <property type="taxonomic scope" value="Bacteria"/>
</dbReference>
<dbReference type="HOGENOM" id="CLU_047363_0_1_14"/>
<dbReference type="Proteomes" id="UP000001016">
    <property type="component" value="Chromosome"/>
</dbReference>
<dbReference type="GO" id="GO:0005829">
    <property type="term" value="C:cytosol"/>
    <property type="evidence" value="ECO:0007669"/>
    <property type="project" value="TreeGrafter"/>
</dbReference>
<dbReference type="GO" id="GO:0052906">
    <property type="term" value="F:tRNA (guanine(37)-N1)-methyltransferase activity"/>
    <property type="evidence" value="ECO:0007669"/>
    <property type="project" value="UniProtKB-UniRule"/>
</dbReference>
<dbReference type="GO" id="GO:0002939">
    <property type="term" value="P:tRNA N1-guanine methylation"/>
    <property type="evidence" value="ECO:0007669"/>
    <property type="project" value="TreeGrafter"/>
</dbReference>
<dbReference type="CDD" id="cd18080">
    <property type="entry name" value="TrmD-like"/>
    <property type="match status" value="1"/>
</dbReference>
<dbReference type="FunFam" id="1.10.1270.20:FF:000001">
    <property type="entry name" value="tRNA (guanine-N(1)-)-methyltransferase"/>
    <property type="match status" value="1"/>
</dbReference>
<dbReference type="FunFam" id="3.40.1280.10:FF:000001">
    <property type="entry name" value="tRNA (guanine-N(1)-)-methyltransferase"/>
    <property type="match status" value="1"/>
</dbReference>
<dbReference type="Gene3D" id="3.40.1280.10">
    <property type="match status" value="1"/>
</dbReference>
<dbReference type="Gene3D" id="1.10.1270.20">
    <property type="entry name" value="tRNA(m1g37)methyltransferase, domain 2"/>
    <property type="match status" value="1"/>
</dbReference>
<dbReference type="HAMAP" id="MF_00605">
    <property type="entry name" value="TrmD"/>
    <property type="match status" value="1"/>
</dbReference>
<dbReference type="InterPro" id="IPR029028">
    <property type="entry name" value="Alpha/beta_knot_MTases"/>
</dbReference>
<dbReference type="InterPro" id="IPR023148">
    <property type="entry name" value="tRNA_m1G_MeTrfase_C_sf"/>
</dbReference>
<dbReference type="InterPro" id="IPR002649">
    <property type="entry name" value="tRNA_m1G_MeTrfase_TrmD"/>
</dbReference>
<dbReference type="InterPro" id="IPR029026">
    <property type="entry name" value="tRNA_m1G_MTases_N"/>
</dbReference>
<dbReference type="InterPro" id="IPR016009">
    <property type="entry name" value="tRNA_MeTrfase_TRMD/TRM10"/>
</dbReference>
<dbReference type="NCBIfam" id="NF000648">
    <property type="entry name" value="PRK00026.1"/>
    <property type="match status" value="1"/>
</dbReference>
<dbReference type="NCBIfam" id="TIGR00088">
    <property type="entry name" value="trmD"/>
    <property type="match status" value="1"/>
</dbReference>
<dbReference type="PANTHER" id="PTHR46417">
    <property type="entry name" value="TRNA (GUANINE-N(1)-)-METHYLTRANSFERASE"/>
    <property type="match status" value="1"/>
</dbReference>
<dbReference type="PANTHER" id="PTHR46417:SF1">
    <property type="entry name" value="TRNA (GUANINE-N(1)-)-METHYLTRANSFERASE"/>
    <property type="match status" value="1"/>
</dbReference>
<dbReference type="Pfam" id="PF01746">
    <property type="entry name" value="tRNA_m1G_MT"/>
    <property type="match status" value="1"/>
</dbReference>
<dbReference type="PIRSF" id="PIRSF000386">
    <property type="entry name" value="tRNA_mtase"/>
    <property type="match status" value="1"/>
</dbReference>
<dbReference type="SUPFAM" id="SSF75217">
    <property type="entry name" value="alpha/beta knot"/>
    <property type="match status" value="1"/>
</dbReference>
<reference key="1">
    <citation type="journal article" date="2004" name="Genome Res.">
        <title>The genome sequence of Mycoplasma mycoides subsp. mycoides SC type strain PG1T, the causative agent of contagious bovine pleuropneumonia (CBPP).</title>
        <authorList>
            <person name="Westberg J."/>
            <person name="Persson A."/>
            <person name="Holmberg A."/>
            <person name="Goesmann A."/>
            <person name="Lundeberg J."/>
            <person name="Johansson K.-E."/>
            <person name="Pettersson B."/>
            <person name="Uhlen M."/>
        </authorList>
    </citation>
    <scope>NUCLEOTIDE SEQUENCE [LARGE SCALE GENOMIC DNA]</scope>
    <source>
        <strain>CCUG 32753 / NCTC 10114 / PG1</strain>
    </source>
</reference>
<protein>
    <recommendedName>
        <fullName evidence="1">tRNA (guanine-N(1)-)-methyltransferase</fullName>
        <ecNumber evidence="1">2.1.1.228</ecNumber>
    </recommendedName>
    <alternativeName>
        <fullName evidence="1">M1G-methyltransferase</fullName>
    </alternativeName>
    <alternativeName>
        <fullName evidence="1">tRNA [GM37] methyltransferase</fullName>
    </alternativeName>
</protein>
<feature type="chain" id="PRO_0000060415" description="tRNA (guanine-N(1)-)-methyltransferase">
    <location>
        <begin position="1"/>
        <end position="240"/>
    </location>
</feature>
<feature type="binding site" evidence="1">
    <location>
        <position position="111"/>
    </location>
    <ligand>
        <name>S-adenosyl-L-methionine</name>
        <dbReference type="ChEBI" id="CHEBI:59789"/>
    </ligand>
</feature>
<feature type="binding site" evidence="1">
    <location>
        <begin position="130"/>
        <end position="135"/>
    </location>
    <ligand>
        <name>S-adenosyl-L-methionine</name>
        <dbReference type="ChEBI" id="CHEBI:59789"/>
    </ligand>
</feature>
<gene>
    <name evidence="1" type="primary">trmD</name>
    <name type="ordered locus">MSC_0427</name>
</gene>